<evidence type="ECO:0000250" key="1">
    <source>
        <dbReference type="UniProtKB" id="A0A499UB99"/>
    </source>
</evidence>
<evidence type="ECO:0000250" key="2">
    <source>
        <dbReference type="UniProtKB" id="P80324"/>
    </source>
</evidence>
<evidence type="ECO:0000255" key="3"/>
<evidence type="ECO:0000269" key="4">
    <source>
    </source>
</evidence>
<evidence type="ECO:0000303" key="5">
    <source>
    </source>
</evidence>
<evidence type="ECO:0000305" key="6"/>
<evidence type="ECO:0000312" key="7">
    <source>
        <dbReference type="EMBL" id="KGB76222.1"/>
    </source>
</evidence>
<evidence type="ECO:0000312" key="8">
    <source>
        <dbReference type="Proteomes" id="UP000029445"/>
    </source>
</evidence>
<protein>
    <recommendedName>
        <fullName evidence="5">D-amino-acid oxidase 2</fullName>
        <shortName evidence="6">DAAO</shortName>
        <shortName evidence="6">DAMOX</shortName>
        <shortName evidence="5">DAO</shortName>
        <ecNumber evidence="4">1.4.3.3</ecNumber>
    </recommendedName>
    <alternativeName>
        <fullName evidence="5">CgDAO2</fullName>
    </alternativeName>
</protein>
<name>OXDA2_CRYD2</name>
<accession>A0A095C6S0</accession>
<organism evidence="8">
    <name type="scientific">Cryptococcus deuterogattii (strain R265)</name>
    <name type="common">Cryptococcus gattii VGII (strain R265)</name>
    <dbReference type="NCBI Taxonomy" id="294750"/>
    <lineage>
        <taxon>Eukaryota</taxon>
        <taxon>Fungi</taxon>
        <taxon>Dikarya</taxon>
        <taxon>Basidiomycota</taxon>
        <taxon>Agaricomycotina</taxon>
        <taxon>Tremellomycetes</taxon>
        <taxon>Tremellales</taxon>
        <taxon>Cryptococcaceae</taxon>
        <taxon>Cryptococcus</taxon>
        <taxon>Cryptococcus gattii species complex</taxon>
    </lineage>
</organism>
<gene>
    <name evidence="5" type="primary">DAO2</name>
    <name evidence="7" type="ORF">CNBG_2060</name>
</gene>
<proteinExistence type="evidence at protein level"/>
<keyword id="KW-0274">FAD</keyword>
<keyword id="KW-0285">Flavoprotein</keyword>
<keyword id="KW-0560">Oxidoreductase</keyword>
<keyword id="KW-0576">Peroxisome</keyword>
<sequence length="392" mass="42599">MSFDAVVIGSGVIGLSIARELDNRGLKVAMVARDLAEDSLSVGFASPWAGCNWYSFAEGGTPAAEWDAITFSKLAKLAEDHPDLCEKIPFCSVWDLPKSDSESEPWFKDLVFEYKKLKSTPGQHLAGGKKFGYSFKSYVLHAPNYIRHLSSEIRARGIPIHRYRLSSIDEAYNLPGIGKVSLVVNASGLGAKSLIGVEDEKVYSGRGQTVLVRAPGFKACIMHTEGFYADLDESGREITPPPPAYIIPRPGPEGHVVLGGVYQKDNWSTLPDLKEAERILKDCYNLAPELAGPNGKSWKDIEIISHNVGLRPAREGEPRLEIEEREVGTGANGGNGYEVAPKFGCEGERRKVAVVHAYGIGSAGFQASLGMAEKASDLVEKYLSGRRTSAKL</sequence>
<feature type="chain" id="PRO_0000460038" description="D-amino-acid oxidase 2">
    <location>
        <begin position="1"/>
        <end position="392"/>
    </location>
</feature>
<feature type="short sequence motif" description="Microbody targeting signal" evidence="3">
    <location>
        <begin position="390"/>
        <end position="392"/>
    </location>
</feature>
<feature type="binding site" evidence="2">
    <location>
        <position position="10"/>
    </location>
    <ligand>
        <name>FAD</name>
        <dbReference type="ChEBI" id="CHEBI:57692"/>
    </ligand>
</feature>
<feature type="binding site" evidence="2">
    <location>
        <position position="13"/>
    </location>
    <ligand>
        <name>FAD</name>
        <dbReference type="ChEBI" id="CHEBI:57692"/>
    </ligand>
</feature>
<feature type="binding site" evidence="2">
    <location>
        <position position="33"/>
    </location>
    <ligand>
        <name>FAD</name>
        <dbReference type="ChEBI" id="CHEBI:57692"/>
    </ligand>
</feature>
<feature type="binding site" evidence="2">
    <location>
        <position position="34"/>
    </location>
    <ligand>
        <name>FAD</name>
        <dbReference type="ChEBI" id="CHEBI:57692"/>
    </ligand>
</feature>
<feature type="binding site" evidence="2">
    <location>
        <position position="45"/>
    </location>
    <ligand>
        <name>FAD</name>
        <dbReference type="ChEBI" id="CHEBI:57692"/>
    </ligand>
</feature>
<feature type="binding site" evidence="2">
    <location>
        <position position="46"/>
    </location>
    <ligand>
        <name>FAD</name>
        <dbReference type="ChEBI" id="CHEBI:57692"/>
    </ligand>
</feature>
<feature type="binding site" evidence="2">
    <location>
        <position position="50"/>
    </location>
    <ligand>
        <name>FAD</name>
        <dbReference type="ChEBI" id="CHEBI:57692"/>
    </ligand>
</feature>
<feature type="binding site" evidence="2">
    <location>
        <position position="52"/>
    </location>
    <ligand>
        <name>FAD</name>
        <dbReference type="ChEBI" id="CHEBI:57692"/>
    </ligand>
</feature>
<feature type="binding site" evidence="2">
    <location>
        <position position="56"/>
    </location>
    <ligand>
        <name>anthranilate</name>
        <dbReference type="ChEBI" id="CHEBI:16567"/>
        <label>2</label>
    </ligand>
</feature>
<feature type="binding site" evidence="2">
    <location>
        <position position="245"/>
    </location>
    <ligand>
        <name>(R)-lactate</name>
        <dbReference type="ChEBI" id="CHEBI:16004"/>
    </ligand>
</feature>
<feature type="binding site" evidence="2">
    <location>
        <position position="245"/>
    </location>
    <ligand>
        <name>anthranilate</name>
        <dbReference type="ChEBI" id="CHEBI:16567"/>
        <label>1</label>
    </ligand>
</feature>
<feature type="binding site" evidence="2">
    <location>
        <position position="262"/>
    </location>
    <ligand>
        <name>(R)-lactate</name>
        <dbReference type="ChEBI" id="CHEBI:16004"/>
    </ligand>
</feature>
<feature type="binding site" evidence="2">
    <location>
        <position position="262"/>
    </location>
    <ligand>
        <name>anthranilate</name>
        <dbReference type="ChEBI" id="CHEBI:16567"/>
        <label>2</label>
    </ligand>
</feature>
<feature type="binding site" evidence="2">
    <location>
        <position position="311"/>
    </location>
    <ligand>
        <name>(R)-lactate</name>
        <dbReference type="ChEBI" id="CHEBI:16004"/>
    </ligand>
</feature>
<feature type="binding site" evidence="2">
    <location>
        <position position="311"/>
    </location>
    <ligand>
        <name>anthranilate</name>
        <dbReference type="ChEBI" id="CHEBI:16567"/>
        <label>1</label>
    </ligand>
</feature>
<feature type="binding site" evidence="2">
    <location>
        <position position="311"/>
    </location>
    <ligand>
        <name>FAD</name>
        <dbReference type="ChEBI" id="CHEBI:57692"/>
    </ligand>
</feature>
<feature type="binding site" evidence="1">
    <location>
        <position position="361"/>
    </location>
    <ligand>
        <name>FAD</name>
        <dbReference type="ChEBI" id="CHEBI:57692"/>
    </ligand>
</feature>
<feature type="binding site" evidence="2">
    <location>
        <position position="362"/>
    </location>
    <ligand>
        <name>(R)-lactate</name>
        <dbReference type="ChEBI" id="CHEBI:16004"/>
    </ligand>
</feature>
<feature type="binding site" evidence="2">
    <location>
        <position position="362"/>
    </location>
    <ligand>
        <name>anthranilate</name>
        <dbReference type="ChEBI" id="CHEBI:16567"/>
        <label>1</label>
    </ligand>
</feature>
<feature type="binding site" evidence="2">
    <location>
        <position position="362"/>
    </location>
    <ligand>
        <name>FAD</name>
        <dbReference type="ChEBI" id="CHEBI:57692"/>
    </ligand>
</feature>
<feature type="binding site" evidence="2">
    <location>
        <position position="364"/>
    </location>
    <ligand>
        <name>FAD</name>
        <dbReference type="ChEBI" id="CHEBI:57692"/>
    </ligand>
</feature>
<feature type="binding site" evidence="2">
    <location>
        <position position="366"/>
    </location>
    <ligand>
        <name>FAD</name>
        <dbReference type="ChEBI" id="CHEBI:57692"/>
    </ligand>
</feature>
<dbReference type="EC" id="1.4.3.3" evidence="4"/>
<dbReference type="EMBL" id="CP025765">
    <property type="protein sequence ID" value="KGB76222.1"/>
    <property type="molecule type" value="Genomic_DNA"/>
</dbReference>
<dbReference type="SMR" id="A0A095C6S0"/>
<dbReference type="STRING" id="294750.A0A095C6S0"/>
<dbReference type="VEuPathDB" id="FungiDB:CNBG_2060"/>
<dbReference type="HOGENOM" id="CLU_034311_1_0_1"/>
<dbReference type="OMA" id="NIRWHYE"/>
<dbReference type="OrthoDB" id="2765at5206"/>
<dbReference type="Proteomes" id="UP000029445">
    <property type="component" value="Chromosome 7"/>
</dbReference>
<dbReference type="GO" id="GO:0005782">
    <property type="term" value="C:peroxisomal matrix"/>
    <property type="evidence" value="ECO:0007669"/>
    <property type="project" value="UniProtKB-SubCell"/>
</dbReference>
<dbReference type="GO" id="GO:0003884">
    <property type="term" value="F:D-amino-acid oxidase activity"/>
    <property type="evidence" value="ECO:0000314"/>
    <property type="project" value="UniProtKB"/>
</dbReference>
<dbReference type="GO" id="GO:0071949">
    <property type="term" value="F:FAD binding"/>
    <property type="evidence" value="ECO:0007669"/>
    <property type="project" value="InterPro"/>
</dbReference>
<dbReference type="GO" id="GO:1990748">
    <property type="term" value="P:cellular detoxification"/>
    <property type="evidence" value="ECO:0000315"/>
    <property type="project" value="UniProtKB"/>
</dbReference>
<dbReference type="GO" id="GO:0019478">
    <property type="term" value="P:D-amino acid catabolic process"/>
    <property type="evidence" value="ECO:0000314"/>
    <property type="project" value="UniProtKB"/>
</dbReference>
<dbReference type="GO" id="GO:0019740">
    <property type="term" value="P:nitrogen utilization"/>
    <property type="evidence" value="ECO:0000314"/>
    <property type="project" value="UniProtKB"/>
</dbReference>
<dbReference type="FunFam" id="3.30.9.10:FF:000018">
    <property type="entry name" value="D-amino acid oxidase, putative"/>
    <property type="match status" value="1"/>
</dbReference>
<dbReference type="Gene3D" id="3.30.9.10">
    <property type="entry name" value="D-Amino Acid Oxidase, subunit A, domain 2"/>
    <property type="match status" value="1"/>
</dbReference>
<dbReference type="Gene3D" id="3.40.50.720">
    <property type="entry name" value="NAD(P)-binding Rossmann-like Domain"/>
    <property type="match status" value="1"/>
</dbReference>
<dbReference type="InterPro" id="IPR006181">
    <property type="entry name" value="D-amino_acid_oxidase_CS"/>
</dbReference>
<dbReference type="InterPro" id="IPR023209">
    <property type="entry name" value="DAO"/>
</dbReference>
<dbReference type="InterPro" id="IPR006076">
    <property type="entry name" value="FAD-dep_OxRdtase"/>
</dbReference>
<dbReference type="PANTHER" id="PTHR11530">
    <property type="entry name" value="D-AMINO ACID OXIDASE"/>
    <property type="match status" value="1"/>
</dbReference>
<dbReference type="PANTHER" id="PTHR11530:SF30">
    <property type="entry name" value="FAD DEPENDENT OXIDOREDUCTASE DOMAIN-CONTAINING PROTEIN"/>
    <property type="match status" value="1"/>
</dbReference>
<dbReference type="Pfam" id="PF01266">
    <property type="entry name" value="DAO"/>
    <property type="match status" value="1"/>
</dbReference>
<dbReference type="PIRSF" id="PIRSF000189">
    <property type="entry name" value="D-aa_oxidase"/>
    <property type="match status" value="1"/>
</dbReference>
<dbReference type="SUPFAM" id="SSF54373">
    <property type="entry name" value="FAD-linked reductases, C-terminal domain"/>
    <property type="match status" value="1"/>
</dbReference>
<dbReference type="SUPFAM" id="SSF51971">
    <property type="entry name" value="Nucleotide-binding domain"/>
    <property type="match status" value="1"/>
</dbReference>
<dbReference type="PROSITE" id="PS00677">
    <property type="entry name" value="DAO"/>
    <property type="match status" value="1"/>
</dbReference>
<reference evidence="8" key="1">
    <citation type="journal article" date="2011" name="MBio">
        <title>Genome variation in Cryptococcus gattii, an emerging pathogen of immunocompetent hosts.</title>
        <authorList>
            <person name="D'Souza C.A."/>
            <person name="Kronstad J.W."/>
            <person name="Taylor G."/>
            <person name="Warren R."/>
            <person name="Yuen M."/>
            <person name="Hu G."/>
            <person name="Jung W.H."/>
            <person name="Sham A."/>
            <person name="Kidd S.E."/>
            <person name="Tangen K."/>
            <person name="Lee N."/>
            <person name="Zeilmaker T."/>
            <person name="Sawkins J."/>
            <person name="McVicker G."/>
            <person name="Shah S."/>
            <person name="Gnerre S."/>
            <person name="Griggs A."/>
            <person name="Zeng Q."/>
            <person name="Bartlett K."/>
            <person name="Li W."/>
            <person name="Wang X."/>
            <person name="Heitman J."/>
            <person name="Stajich J.E."/>
            <person name="Fraser J.A."/>
            <person name="Meyer W."/>
            <person name="Carter D."/>
            <person name="Schein J."/>
            <person name="Krzywinski M."/>
            <person name="Kwon-Chung K.J."/>
            <person name="Varma A."/>
            <person name="Wang J."/>
            <person name="Brunham R."/>
            <person name="Fyfe M."/>
            <person name="Ouellette B.F.F."/>
            <person name="Siddiqui A."/>
            <person name="Marra M."/>
            <person name="Jones S."/>
            <person name="Holt R."/>
            <person name="Birren B.W."/>
            <person name="Galagan J.E."/>
            <person name="Cuomo C.A."/>
        </authorList>
    </citation>
    <scope>NUCLEOTIDE SEQUENCE [LARGE SCALE GENOMIC DNA]</scope>
    <source>
        <strain evidence="7">R265</strain>
    </source>
</reference>
<reference evidence="8" key="2">
    <citation type="journal article" date="2018" name="Proc. Natl. Acad. Sci. U.S.A.">
        <title>RNAi is a critical determinant of centromere evolution in closely related fungi.</title>
        <authorList>
            <person name="Yadav V."/>
            <person name="Sun S."/>
            <person name="Billmyre R.B."/>
            <person name="Thimmappa B.C."/>
            <person name="Shea T."/>
            <person name="Lintner R."/>
            <person name="Bakkeren G."/>
            <person name="Cuomo C.A."/>
            <person name="Heitman J."/>
            <person name="Sanyal K."/>
        </authorList>
    </citation>
    <scope>NUCLEOTIDE SEQUENCE [LARGE SCALE GENOMIC DNA]</scope>
    <source>
        <strain evidence="7">R265</strain>
    </source>
</reference>
<reference evidence="6" key="3">
    <citation type="journal article" date="2015" name="PLoS ONE">
        <title>Differences between Cryptococcus neoformans and Cryptococcus gattii in the Molecular Mechanisms Governing Utilization of D-Amino Acids as the Sole Nitrogen Source.</title>
        <authorList>
            <person name="Chang Y.C."/>
            <person name="Khanal Lamichhane A."/>
            <person name="Bradley J."/>
            <person name="Rodgers L."/>
            <person name="Ngamskulrungroj P."/>
            <person name="Kwon-Chung K.J."/>
        </authorList>
    </citation>
    <scope>FUNCTION</scope>
    <scope>CATALYTIC ACTIVITY</scope>
    <scope>INDUCTION</scope>
    <scope>DISRUPTION PHENOTYPE</scope>
</reference>
<comment type="function">
    <text evidence="4">Catalyzes the oxidative deamination of D-amino acids with broad substrate specificity (PubMed:26132227). Enables the organism to utilize D-amino acids as a source of nutrients (PubMed:26132227). Enables the organism to utilize D-alanine, D-cysteine, D-histidine, D-leucine, D-methionine, D-phenylalanine, D-proline, D-serine, D-threonine, D-aspartate and D-valine as a nitrogen source and may also contribute to utlization of D-tryptophan, D-tyrosine and D-asparagine as a nitrogen source (PubMed:26132227). Protects the organism from the toxicity of D-amino acids, including from D-alanine (PubMed:26132227). May play a role in its interaction with the host (PubMed:26132227).</text>
</comment>
<comment type="catalytic activity">
    <reaction evidence="4">
        <text>a D-alpha-amino acid + O2 + H2O = a 2-oxocarboxylate + H2O2 + NH4(+)</text>
        <dbReference type="Rhea" id="RHEA:21816"/>
        <dbReference type="ChEBI" id="CHEBI:15377"/>
        <dbReference type="ChEBI" id="CHEBI:15379"/>
        <dbReference type="ChEBI" id="CHEBI:16240"/>
        <dbReference type="ChEBI" id="CHEBI:28938"/>
        <dbReference type="ChEBI" id="CHEBI:35179"/>
        <dbReference type="ChEBI" id="CHEBI:59871"/>
        <dbReference type="EC" id="1.4.3.3"/>
    </reaction>
    <physiologicalReaction direction="left-to-right" evidence="4">
        <dbReference type="Rhea" id="RHEA:21817"/>
    </physiologicalReaction>
</comment>
<comment type="catalytic activity">
    <reaction evidence="4">
        <text>D-methionine + O2 + H2O = 4-methylsulfanyl-2-oxobutanoate + H2O2 + NH4(+)</text>
        <dbReference type="Rhea" id="RHEA:78207"/>
        <dbReference type="ChEBI" id="CHEBI:15377"/>
        <dbReference type="ChEBI" id="CHEBI:15379"/>
        <dbReference type="ChEBI" id="CHEBI:16240"/>
        <dbReference type="ChEBI" id="CHEBI:16723"/>
        <dbReference type="ChEBI" id="CHEBI:28938"/>
        <dbReference type="ChEBI" id="CHEBI:57932"/>
    </reaction>
    <physiologicalReaction direction="left-to-right" evidence="4">
        <dbReference type="Rhea" id="RHEA:78208"/>
    </physiologicalReaction>
</comment>
<comment type="catalytic activity">
    <reaction evidence="4">
        <text>D-serine + O2 + H2O = 3-hydroxypyruvate + H2O2 + NH4(+)</text>
        <dbReference type="Rhea" id="RHEA:70951"/>
        <dbReference type="ChEBI" id="CHEBI:15377"/>
        <dbReference type="ChEBI" id="CHEBI:15379"/>
        <dbReference type="ChEBI" id="CHEBI:16240"/>
        <dbReference type="ChEBI" id="CHEBI:17180"/>
        <dbReference type="ChEBI" id="CHEBI:28938"/>
        <dbReference type="ChEBI" id="CHEBI:35247"/>
    </reaction>
    <physiologicalReaction direction="left-to-right" evidence="4">
        <dbReference type="Rhea" id="RHEA:70952"/>
    </physiologicalReaction>
</comment>
<comment type="catalytic activity">
    <reaction evidence="4">
        <text>D-histidine + O2 + H2O = 3-(imidazol-5-yl)pyruvate + H2O2 + NH4(+)</text>
        <dbReference type="Rhea" id="RHEA:78227"/>
        <dbReference type="ChEBI" id="CHEBI:15377"/>
        <dbReference type="ChEBI" id="CHEBI:15379"/>
        <dbReference type="ChEBI" id="CHEBI:16240"/>
        <dbReference type="ChEBI" id="CHEBI:28938"/>
        <dbReference type="ChEBI" id="CHEBI:58133"/>
        <dbReference type="ChEBI" id="CHEBI:142967"/>
    </reaction>
    <physiologicalReaction direction="left-to-right" evidence="4">
        <dbReference type="Rhea" id="RHEA:78228"/>
    </physiologicalReaction>
</comment>
<comment type="catalytic activity">
    <reaction evidence="4">
        <text>D-proline + O2 = 1-pyrroline-2-carboxylate + H2O2</text>
        <dbReference type="Rhea" id="RHEA:78259"/>
        <dbReference type="ChEBI" id="CHEBI:15379"/>
        <dbReference type="ChEBI" id="CHEBI:16240"/>
        <dbReference type="ChEBI" id="CHEBI:39785"/>
        <dbReference type="ChEBI" id="CHEBI:57726"/>
    </reaction>
    <physiologicalReaction direction="left-to-right" evidence="4">
        <dbReference type="Rhea" id="RHEA:78260"/>
    </physiologicalReaction>
</comment>
<comment type="catalytic activity">
    <reaction evidence="4">
        <text>D-alanine + O2 + H2O = pyruvate + H2O2 + NH4(+)</text>
        <dbReference type="Rhea" id="RHEA:22688"/>
        <dbReference type="ChEBI" id="CHEBI:15361"/>
        <dbReference type="ChEBI" id="CHEBI:15377"/>
        <dbReference type="ChEBI" id="CHEBI:15379"/>
        <dbReference type="ChEBI" id="CHEBI:16240"/>
        <dbReference type="ChEBI" id="CHEBI:28938"/>
        <dbReference type="ChEBI" id="CHEBI:57416"/>
    </reaction>
    <physiologicalReaction direction="left-to-right" evidence="4">
        <dbReference type="Rhea" id="RHEA:22689"/>
    </physiologicalReaction>
</comment>
<comment type="catalytic activity">
    <reaction evidence="4">
        <text>D-leucine + O2 + H2O = 4-methyl-2-oxopentanoate + H2O2 + NH4(+)</text>
        <dbReference type="Rhea" id="RHEA:78211"/>
        <dbReference type="ChEBI" id="CHEBI:15377"/>
        <dbReference type="ChEBI" id="CHEBI:15379"/>
        <dbReference type="ChEBI" id="CHEBI:16240"/>
        <dbReference type="ChEBI" id="CHEBI:17865"/>
        <dbReference type="ChEBI" id="CHEBI:28938"/>
        <dbReference type="ChEBI" id="CHEBI:143079"/>
    </reaction>
    <physiologicalReaction direction="left-to-right" evidence="4">
        <dbReference type="Rhea" id="RHEA:78212"/>
    </physiologicalReaction>
</comment>
<comment type="catalytic activity">
    <reaction evidence="4">
        <text>D-valine + O2 + H2O = 3-methyl-2-oxobutanoate + H2O2 + NH4(+)</text>
        <dbReference type="Rhea" id="RHEA:78203"/>
        <dbReference type="ChEBI" id="CHEBI:11851"/>
        <dbReference type="ChEBI" id="CHEBI:15377"/>
        <dbReference type="ChEBI" id="CHEBI:15379"/>
        <dbReference type="ChEBI" id="CHEBI:16240"/>
        <dbReference type="ChEBI" id="CHEBI:28938"/>
        <dbReference type="ChEBI" id="CHEBI:74338"/>
    </reaction>
    <physiologicalReaction direction="left-to-right" evidence="4">
        <dbReference type="Rhea" id="RHEA:78204"/>
    </physiologicalReaction>
</comment>
<comment type="cofactor">
    <cofactor evidence="2">
        <name>FAD</name>
        <dbReference type="ChEBI" id="CHEBI:57692"/>
    </cofactor>
</comment>
<comment type="subcellular location">
    <subcellularLocation>
        <location evidence="2">Peroxisome matrix</location>
    </subcellularLocation>
</comment>
<comment type="induction">
    <text evidence="4">Expression increases when grown on D-alanine or D-proline as nitrogen source.</text>
</comment>
<comment type="disruption phenotype">
    <text evidence="4">Decreases growth on D-alanine, D-cysteine, D-histidine, D-leucine, D-methionine, D-phenylalanine, D-proline, D-serine, D-threonine, and D-valine nitrogen sources (PubMed:26132227). Decreases growth in presence of D-alanine (PubMed:26132227). Does not affect virulence in a mouse intrapharyngeal aspiration model of infection or an intravenous injection model of infection (PubMed:26132227). Triple knockout of DAO1, DAO2 and DAO3 decreases growth on D-tryptophan, D-tyrosine and D-asparagine nitrogen sources and decreases virulence in a mouse intrapharyngeal aspiration model and an intravenous injection model of infection (PubMed:26132227).</text>
</comment>
<comment type="similarity">
    <text evidence="6">Belongs to the DAMOX/DASOX family.</text>
</comment>